<organism>
    <name type="scientific">Clarias gariepinus</name>
    <name type="common">North African catfish</name>
    <name type="synonym">Silurus gariepinus</name>
    <dbReference type="NCBI Taxonomy" id="13013"/>
    <lineage>
        <taxon>Eukaryota</taxon>
        <taxon>Metazoa</taxon>
        <taxon>Chordata</taxon>
        <taxon>Craniata</taxon>
        <taxon>Vertebrata</taxon>
        <taxon>Euteleostomi</taxon>
        <taxon>Actinopterygii</taxon>
        <taxon>Neopterygii</taxon>
        <taxon>Teleostei</taxon>
        <taxon>Ostariophysi</taxon>
        <taxon>Siluriformes</taxon>
        <taxon>Clariidae</taxon>
        <taxon>Clarias</taxon>
    </lineage>
</organism>
<dbReference type="EMBL" id="X97761">
    <property type="protein sequence ID" value="CAA66359.1"/>
    <property type="molecule type" value="mRNA"/>
</dbReference>
<dbReference type="SMR" id="P53543"/>
<dbReference type="GlyCosmos" id="P53543">
    <property type="glycosylation" value="1 site, No reported glycans"/>
</dbReference>
<dbReference type="OrthoDB" id="8453657at2759"/>
<dbReference type="GO" id="GO:0005737">
    <property type="term" value="C:cytoplasm"/>
    <property type="evidence" value="ECO:0007669"/>
    <property type="project" value="TreeGrafter"/>
</dbReference>
<dbReference type="GO" id="GO:0005615">
    <property type="term" value="C:extracellular space"/>
    <property type="evidence" value="ECO:0007669"/>
    <property type="project" value="TreeGrafter"/>
</dbReference>
<dbReference type="GO" id="GO:0031762">
    <property type="term" value="F:follicle-stimulating hormone receptor binding"/>
    <property type="evidence" value="ECO:0000250"/>
    <property type="project" value="UniProtKB"/>
</dbReference>
<dbReference type="GO" id="GO:0005179">
    <property type="term" value="F:hormone activity"/>
    <property type="evidence" value="ECO:0007669"/>
    <property type="project" value="UniProtKB-KW"/>
</dbReference>
<dbReference type="GO" id="GO:0031775">
    <property type="term" value="F:lutropin-choriogonadotropic hormone receptor binding"/>
    <property type="evidence" value="ECO:0000250"/>
    <property type="project" value="UniProtKB"/>
</dbReference>
<dbReference type="GO" id="GO:0046982">
    <property type="term" value="F:protein heterodimerization activity"/>
    <property type="evidence" value="ECO:0000250"/>
    <property type="project" value="UniProtKB"/>
</dbReference>
<dbReference type="GO" id="GO:0007186">
    <property type="term" value="P:G protein-coupled receptor signaling pathway"/>
    <property type="evidence" value="ECO:0007669"/>
    <property type="project" value="TreeGrafter"/>
</dbReference>
<dbReference type="GO" id="GO:2000836">
    <property type="term" value="P:positive regulation of androgen secretion"/>
    <property type="evidence" value="ECO:0000250"/>
    <property type="project" value="UniProtKB"/>
</dbReference>
<dbReference type="GO" id="GO:2000866">
    <property type="term" value="P:positive regulation of estradiol secretion"/>
    <property type="evidence" value="ECO:0000250"/>
    <property type="project" value="UniProtKB"/>
</dbReference>
<dbReference type="GO" id="GO:0010628">
    <property type="term" value="P:positive regulation of gene expression"/>
    <property type="evidence" value="ECO:0000250"/>
    <property type="project" value="UniProtKB"/>
</dbReference>
<dbReference type="CDD" id="cd00069">
    <property type="entry name" value="GHB_like"/>
    <property type="match status" value="1"/>
</dbReference>
<dbReference type="FunFam" id="2.10.90.10:FF:000007">
    <property type="entry name" value="Luteinizing hormone beta subunit"/>
    <property type="match status" value="1"/>
</dbReference>
<dbReference type="Gene3D" id="2.10.90.10">
    <property type="entry name" value="Cystine-knot cytokines"/>
    <property type="match status" value="1"/>
</dbReference>
<dbReference type="InterPro" id="IPR029034">
    <property type="entry name" value="Cystine-knot_cytokine"/>
</dbReference>
<dbReference type="InterPro" id="IPR006208">
    <property type="entry name" value="Glyco_hormone_CN"/>
</dbReference>
<dbReference type="InterPro" id="IPR001545">
    <property type="entry name" value="Gonadotropin_bsu"/>
</dbReference>
<dbReference type="InterPro" id="IPR018245">
    <property type="entry name" value="Gonadotropin_bsu_CS"/>
</dbReference>
<dbReference type="PANTHER" id="PTHR11515">
    <property type="entry name" value="GLYCOPROTEIN HORMONE BETA CHAIN"/>
    <property type="match status" value="1"/>
</dbReference>
<dbReference type="PANTHER" id="PTHR11515:SF11">
    <property type="entry name" value="LUTROPIN SUBUNIT BETA"/>
    <property type="match status" value="1"/>
</dbReference>
<dbReference type="Pfam" id="PF00007">
    <property type="entry name" value="Cys_knot"/>
    <property type="match status" value="1"/>
</dbReference>
<dbReference type="SMART" id="SM00068">
    <property type="entry name" value="GHB"/>
    <property type="match status" value="1"/>
</dbReference>
<dbReference type="SUPFAM" id="SSF57501">
    <property type="entry name" value="Cystine-knot cytokines"/>
    <property type="match status" value="1"/>
</dbReference>
<dbReference type="PROSITE" id="PS00261">
    <property type="entry name" value="GLYCO_HORMONE_BETA_1"/>
    <property type="match status" value="1"/>
</dbReference>
<dbReference type="PROSITE" id="PS00689">
    <property type="entry name" value="GLYCO_HORMONE_BETA_2"/>
    <property type="match status" value="1"/>
</dbReference>
<feature type="signal peptide" evidence="3">
    <location>
        <begin position="1"/>
        <end position="21"/>
    </location>
</feature>
<feature type="chain" id="PRO_0000011683" description="Gonadotropin subunit beta-2">
    <location>
        <begin position="22"/>
        <end position="138"/>
    </location>
</feature>
<feature type="glycosylation site" description="N-linked (GlcNAc...) asparagine" evidence="2">
    <location>
        <position position="31"/>
    </location>
</feature>
<feature type="disulfide bond" evidence="1">
    <location>
        <begin position="27"/>
        <end position="75"/>
    </location>
</feature>
<feature type="disulfide bond" evidence="1">
    <location>
        <begin position="41"/>
        <end position="90"/>
    </location>
</feature>
<feature type="disulfide bond" evidence="1">
    <location>
        <begin position="44"/>
        <end position="128"/>
    </location>
</feature>
<feature type="disulfide bond" evidence="1">
    <location>
        <begin position="52"/>
        <end position="106"/>
    </location>
</feature>
<feature type="disulfide bond" evidence="1">
    <location>
        <begin position="56"/>
        <end position="108"/>
    </location>
</feature>
<feature type="disulfide bond" evidence="1">
    <location>
        <begin position="111"/>
        <end position="118"/>
    </location>
</feature>
<evidence type="ECO:0000250" key="1"/>
<evidence type="ECO:0000255" key="2"/>
<evidence type="ECO:0000269" key="3">
    <source>
    </source>
</evidence>
<evidence type="ECO:0000305" key="4"/>
<protein>
    <recommendedName>
        <fullName>Gonadotropin subunit beta-2</fullName>
    </recommendedName>
    <alternativeName>
        <fullName>GTH-II-beta</fullName>
    </alternativeName>
    <alternativeName>
        <fullName>Gonadotropin beta-II chain</fullName>
    </alternativeName>
</protein>
<gene>
    <name type="primary">cgbb</name>
</gene>
<name>GTHB2_CLAGA</name>
<sequence length="138" mass="15772">MPASSYFLLFFFMNFFSPAQSYLLTHCEPVNETVSVEKDGCPKCLAFQTSICSGHCFTKEPVYKSPFSSIYQHVCTYRDVRYETIRLPDCRPGVDPHVTYPVALSCECSLCTMDTSDCTIESLNPDFCMTQKEFILDY</sequence>
<proteinExistence type="evidence at protein level"/>
<reference key="1">
    <citation type="submission" date="1996-05" db="EMBL/GenBank/DDBJ databases">
        <authorList>
            <person name="Rebers F.E.M."/>
            <person name="Tensen C.P."/>
            <person name="Schulz R.W."/>
            <person name="Goos H.J.T."/>
            <person name="Bogerd J."/>
        </authorList>
    </citation>
    <scope>NUCLEOTIDE SEQUENCE [MRNA]</scope>
    <source>
        <tissue>Pituitary</tissue>
    </source>
</reference>
<reference key="2">
    <citation type="journal article" date="1992" name="Gen. Comp. Endocrinol.">
        <title>Maturational gonadotropin from the African catfish, Clarias gariepinus: purification, characterization, localization, and biological activity.</title>
        <authorList>
            <person name="Koide Y."/>
            <person name="Noso T."/>
            <person name="Schouten G."/>
            <person name="Peute J."/>
            <person name="Zandbergen M.A."/>
            <person name="Bogerd J."/>
            <person name="Schulz R.W."/>
            <person name="Kawauchi H."/>
            <person name="Goos H.J."/>
        </authorList>
    </citation>
    <scope>PROTEIN SEQUENCE OF 22-138</scope>
    <source>
        <tissue>Pituitary</tissue>
    </source>
</reference>
<comment type="function">
    <text>Involved in gametogenesis and steroidogenesis.</text>
</comment>
<comment type="subunit">
    <text>Heterodimer of an alpha and a beta chain.</text>
</comment>
<comment type="subcellular location">
    <subcellularLocation>
        <location>Secreted</location>
    </subcellularLocation>
</comment>
<comment type="similarity">
    <text evidence="4">Belongs to the glycoprotein hormones subunit beta family.</text>
</comment>
<keyword id="KW-0903">Direct protein sequencing</keyword>
<keyword id="KW-1015">Disulfide bond</keyword>
<keyword id="KW-0325">Glycoprotein</keyword>
<keyword id="KW-0372">Hormone</keyword>
<keyword id="KW-0964">Secreted</keyword>
<keyword id="KW-0732">Signal</keyword>
<accession>P53543</accession>